<comment type="function">
    <text evidence="1">Catalyzes the NADPH-dependent reduction of glutamyl-tRNA(Glu) to glutamate 1-semialdehyde (GSA).</text>
</comment>
<comment type="catalytic activity">
    <reaction evidence="1">
        <text>(S)-4-amino-5-oxopentanoate + tRNA(Glu) + NADP(+) = L-glutamyl-tRNA(Glu) + NADPH + H(+)</text>
        <dbReference type="Rhea" id="RHEA:12344"/>
        <dbReference type="Rhea" id="RHEA-COMP:9663"/>
        <dbReference type="Rhea" id="RHEA-COMP:9680"/>
        <dbReference type="ChEBI" id="CHEBI:15378"/>
        <dbReference type="ChEBI" id="CHEBI:57501"/>
        <dbReference type="ChEBI" id="CHEBI:57783"/>
        <dbReference type="ChEBI" id="CHEBI:58349"/>
        <dbReference type="ChEBI" id="CHEBI:78442"/>
        <dbReference type="ChEBI" id="CHEBI:78520"/>
        <dbReference type="EC" id="1.2.1.70"/>
    </reaction>
</comment>
<comment type="pathway">
    <text evidence="1">Porphyrin-containing compound metabolism; protoporphyrin-IX biosynthesis; 5-aminolevulinate from L-glutamyl-tRNA(Glu): step 1/2.</text>
</comment>
<comment type="subunit">
    <text evidence="1">Homodimer.</text>
</comment>
<comment type="domain">
    <text evidence="1">Possesses an unusual extended V-shaped dimeric structure with each monomer consisting of three distinct domains arranged along a curved 'spinal' alpha-helix. The N-terminal catalytic domain specifically recognizes the glutamate moiety of the substrate. The second domain is the NADPH-binding domain, and the third C-terminal domain is responsible for dimerization.</text>
</comment>
<comment type="miscellaneous">
    <text evidence="1">During catalysis, the active site Cys acts as a nucleophile attacking the alpha-carbonyl group of tRNA-bound glutamate with the formation of a thioester intermediate between enzyme and glutamate, and the concomitant release of tRNA(Glu). The thioester intermediate is finally reduced by direct hydride transfer from NADPH, to form the product GSA.</text>
</comment>
<comment type="similarity">
    <text evidence="1">Belongs to the glutamyl-tRNA reductase family.</text>
</comment>
<evidence type="ECO:0000255" key="1">
    <source>
        <dbReference type="HAMAP-Rule" id="MF_00087"/>
    </source>
</evidence>
<protein>
    <recommendedName>
        <fullName evidence="1">Glutamyl-tRNA reductase</fullName>
        <shortName evidence="1">GluTR</shortName>
        <ecNumber evidence="1">1.2.1.70</ecNumber>
    </recommendedName>
</protein>
<dbReference type="EC" id="1.2.1.70" evidence="1"/>
<dbReference type="EMBL" id="AE002160">
    <property type="protein sequence ID" value="AAF38924.1"/>
    <property type="molecule type" value="Genomic_DNA"/>
</dbReference>
<dbReference type="PIR" id="E81748">
    <property type="entry name" value="E81748"/>
</dbReference>
<dbReference type="RefSeq" id="WP_010229174.1">
    <property type="nucleotide sequence ID" value="NZ_CP063055.1"/>
</dbReference>
<dbReference type="SMR" id="Q9PLR2"/>
<dbReference type="GeneID" id="1245558"/>
<dbReference type="KEGG" id="cmu:TC_0033"/>
<dbReference type="eggNOG" id="COG0373">
    <property type="taxonomic scope" value="Bacteria"/>
</dbReference>
<dbReference type="HOGENOM" id="CLU_035113_3_1_0"/>
<dbReference type="OrthoDB" id="110209at2"/>
<dbReference type="UniPathway" id="UPA00251">
    <property type="reaction ID" value="UER00316"/>
</dbReference>
<dbReference type="Proteomes" id="UP000000800">
    <property type="component" value="Chromosome"/>
</dbReference>
<dbReference type="GO" id="GO:0008883">
    <property type="term" value="F:glutamyl-tRNA reductase activity"/>
    <property type="evidence" value="ECO:0007669"/>
    <property type="project" value="UniProtKB-UniRule"/>
</dbReference>
<dbReference type="GO" id="GO:0050661">
    <property type="term" value="F:NADP binding"/>
    <property type="evidence" value="ECO:0007669"/>
    <property type="project" value="InterPro"/>
</dbReference>
<dbReference type="GO" id="GO:0006782">
    <property type="term" value="P:protoporphyrinogen IX biosynthetic process"/>
    <property type="evidence" value="ECO:0007669"/>
    <property type="project" value="UniProtKB-UniRule"/>
</dbReference>
<dbReference type="Gene3D" id="3.30.460.30">
    <property type="entry name" value="Glutamyl-tRNA reductase, N-terminal domain"/>
    <property type="match status" value="1"/>
</dbReference>
<dbReference type="HAMAP" id="MF_00087">
    <property type="entry name" value="Glu_tRNA_reductase"/>
    <property type="match status" value="1"/>
</dbReference>
<dbReference type="InterPro" id="IPR000343">
    <property type="entry name" value="4pyrrol_synth_GluRdtase"/>
</dbReference>
<dbReference type="InterPro" id="IPR015895">
    <property type="entry name" value="4pyrrol_synth_GluRdtase_N"/>
</dbReference>
<dbReference type="InterPro" id="IPR018214">
    <property type="entry name" value="GluRdtase_CS"/>
</dbReference>
<dbReference type="InterPro" id="IPR036343">
    <property type="entry name" value="GluRdtase_N_sf"/>
</dbReference>
<dbReference type="NCBIfam" id="NF001909">
    <property type="entry name" value="PRK00676.1"/>
    <property type="match status" value="1"/>
</dbReference>
<dbReference type="PANTHER" id="PTHR43120">
    <property type="entry name" value="GLUTAMYL-TRNA REDUCTASE 1, CHLOROPLASTIC"/>
    <property type="match status" value="1"/>
</dbReference>
<dbReference type="PANTHER" id="PTHR43120:SF1">
    <property type="entry name" value="GLUTAMYL-TRNA REDUCTASE 1, CHLOROPLASTIC"/>
    <property type="match status" value="1"/>
</dbReference>
<dbReference type="Pfam" id="PF05201">
    <property type="entry name" value="GlutR_N"/>
    <property type="match status" value="1"/>
</dbReference>
<dbReference type="SUPFAM" id="SSF69742">
    <property type="entry name" value="Glutamyl tRNA-reductase catalytic, N-terminal domain"/>
    <property type="match status" value="1"/>
</dbReference>
<dbReference type="PROSITE" id="PS00747">
    <property type="entry name" value="GLUTR"/>
    <property type="match status" value="1"/>
</dbReference>
<reference key="1">
    <citation type="journal article" date="2000" name="Nucleic Acids Res.">
        <title>Genome sequences of Chlamydia trachomatis MoPn and Chlamydia pneumoniae AR39.</title>
        <authorList>
            <person name="Read T.D."/>
            <person name="Brunham R.C."/>
            <person name="Shen C."/>
            <person name="Gill S.R."/>
            <person name="Heidelberg J.F."/>
            <person name="White O."/>
            <person name="Hickey E.K."/>
            <person name="Peterson J.D."/>
            <person name="Utterback T.R."/>
            <person name="Berry K.J."/>
            <person name="Bass S."/>
            <person name="Linher K.D."/>
            <person name="Weidman J.F."/>
            <person name="Khouri H.M."/>
            <person name="Craven B."/>
            <person name="Bowman C."/>
            <person name="Dodson R.J."/>
            <person name="Gwinn M.L."/>
            <person name="Nelson W.C."/>
            <person name="DeBoy R.T."/>
            <person name="Kolonay J.F."/>
            <person name="McClarty G."/>
            <person name="Salzberg S.L."/>
            <person name="Eisen J.A."/>
            <person name="Fraser C.M."/>
        </authorList>
    </citation>
    <scope>NUCLEOTIDE SEQUENCE [LARGE SCALE GENOMIC DNA]</scope>
    <source>
        <strain>MoPn / Nigg</strain>
    </source>
</reference>
<accession>Q9PLR2</accession>
<proteinExistence type="inferred from homology"/>
<organism>
    <name type="scientific">Chlamydia muridarum (strain MoPn / Nigg)</name>
    <dbReference type="NCBI Taxonomy" id="243161"/>
    <lineage>
        <taxon>Bacteria</taxon>
        <taxon>Pseudomonadati</taxon>
        <taxon>Chlamydiota</taxon>
        <taxon>Chlamydiia</taxon>
        <taxon>Chlamydiales</taxon>
        <taxon>Chlamydiaceae</taxon>
        <taxon>Chlamydia/Chlamydophila group</taxon>
        <taxon>Chlamydia</taxon>
    </lineage>
</organism>
<gene>
    <name evidence="1" type="primary">hemA</name>
    <name type="ordered locus">TC_0033</name>
</gene>
<feature type="chain" id="PRO_0000114005" description="Glutamyl-tRNA reductase">
    <location>
        <begin position="1"/>
        <end position="333"/>
    </location>
</feature>
<feature type="active site" description="Nucleophile" evidence="1">
    <location>
        <position position="61"/>
    </location>
</feature>
<feature type="binding site" evidence="1">
    <location>
        <begin position="60"/>
        <end position="63"/>
    </location>
    <ligand>
        <name>substrate</name>
    </ligand>
</feature>
<feature type="binding site" evidence="1">
    <location>
        <position position="110"/>
    </location>
    <ligand>
        <name>substrate</name>
    </ligand>
</feature>
<feature type="binding site" evidence="1">
    <location>
        <begin position="115"/>
        <end position="117"/>
    </location>
    <ligand>
        <name>substrate</name>
    </ligand>
</feature>
<feature type="binding site" evidence="1">
    <location>
        <position position="121"/>
    </location>
    <ligand>
        <name>substrate</name>
    </ligand>
</feature>
<feature type="binding site" evidence="1">
    <location>
        <begin position="189"/>
        <end position="194"/>
    </location>
    <ligand>
        <name>NADP(+)</name>
        <dbReference type="ChEBI" id="CHEBI:58349"/>
    </ligand>
</feature>
<feature type="site" description="Important for activity" evidence="1">
    <location>
        <position position="100"/>
    </location>
</feature>
<sequence length="333" mass="39016">MVREGEEHIDEEFSLGVIGVSYRETALQQREQVLQFLQQAQLSFYPKFPQEEGRSVLLSTCHRVELYGMATEAIFSTLEKEIREMGAIPYFYRNQDCFSHLFCVVGGMDSLVLGETEIQGQVKRAYLQAIEEQKLAFALHFLFQKALKEGKVFRTKRSSPSTEITIPAFVQHELQKQKMARSASLLFMGYSEINRSVAYYLQKQGFSRITFCSRQPLSLRSMDQVLREEVCFQDPYHVIFLGSSELRHAFPRSLWEGVWDFPGRLVFDFAVPRALPVQPACRDRYIDMEQISDWLRQHQKEVFPLQLDSLREVGYRYWESLNRRLARRRYASV</sequence>
<keyword id="KW-0521">NADP</keyword>
<keyword id="KW-0560">Oxidoreductase</keyword>
<keyword id="KW-0627">Porphyrin biosynthesis</keyword>
<name>HEM1_CHLMU</name>